<sequence length="333" mass="35908">MATGGYRSGGSTTTDFLEEWKAKREKMRAKQNPAGPGSSGGDPAAKSPAGSLTPTAVAGTSELNHGPAGAAAPAAPAPGALNCAHGSSTLPRAAPGSRRAEDECPSAAAASGAPGSRGDEEEPDSAREKGRSSGPSARKGKGQIEKRKLREKRRSTGVVNIPAAECLDEYEDDEAGQKERKREDAITQQNTIQNEAATLPDPGTSYLPQDPSRTVPGRYKSTTSAPEDEISNRYPRTDRSGFSRHNRDANAPASFSSSSTLEKRIEDLEKEVVRERQENLRLVRLMQDKEEMIGKLKEEIDLLNRDLDDMEDENEQLKQENKTLLKVVGQLTR</sequence>
<reference key="1">
    <citation type="journal article" date="2006" name="Apoptosis">
        <title>A novel isoform of prostate apoptosis response 4 (PAR-4) that co-distributes with F-actin and prevents apoptosis in neural stem cells.</title>
        <authorList>
            <person name="Wang G."/>
            <person name="Silva J."/>
            <person name="Krishnamurthy K."/>
            <person name="Bieberich E."/>
        </authorList>
    </citation>
    <scope>NUCLEOTIDE SEQUENCE [MRNA] (ISOFORMS 1 AND 2)</scope>
    <source>
        <strain>129S4/SvJae</strain>
    </source>
</reference>
<reference key="2">
    <citation type="submission" date="2006-01" db="EMBL/GenBank/DDBJ databases">
        <title>Mouse par-4 cDNA sequence.</title>
        <authorList>
            <person name="Han S.-S."/>
            <person name="Rangnekar V.M."/>
        </authorList>
    </citation>
    <scope>NUCLEOTIDE SEQUENCE [MRNA] (ISOFORM 1)</scope>
    <source>
        <strain>C57BL/6J</strain>
    </source>
</reference>
<reference key="3">
    <citation type="submission" date="2001-05" db="EMBL/GenBank/DDBJ databases">
        <authorList>
            <person name="Hackett J.D."/>
        </authorList>
    </citation>
    <scope>NUCLEOTIDE SEQUENCE [MRNA] OF 137-333 (ISOFORM 1)</scope>
    <source>
        <strain>Swiss Webster / NIH</strain>
    </source>
</reference>
<reference key="4">
    <citation type="journal article" date="2005" name="J. Neurochem.">
        <title>RNAi knockdown of Par-4 inhibits neurosynaptic degeneration in ALS-linked mice.</title>
        <authorList>
            <person name="Xie J."/>
            <person name="Awad K.S."/>
            <person name="Guo Q."/>
        </authorList>
    </citation>
    <scope>FUNCTION IN NEUROSYNAPTIC DEGENERATION</scope>
</reference>
<reference key="5">
    <citation type="journal article" date="2006" name="Nat. Struct. Mol. Biol.">
        <title>The SPRY domain of SSB-2 adopts a novel fold that presents conserved Par-4-binding residues.</title>
        <authorList>
            <person name="Masters S.L."/>
            <person name="Yao S."/>
            <person name="Willson T.A."/>
            <person name="Zhang J.-G."/>
            <person name="Palmer K.R."/>
            <person name="Smith B.J."/>
            <person name="Babon J.J."/>
            <person name="Nicola N.A."/>
            <person name="Norton R.S."/>
            <person name="Nicholson S.E."/>
        </authorList>
    </citation>
    <scope>INTERACTION WITH SPSB1; SPSB2 AND SPSB4</scope>
</reference>
<reference key="6">
    <citation type="journal article" date="2010" name="Cell">
        <title>A tissue-specific atlas of mouse protein phosphorylation and expression.</title>
        <authorList>
            <person name="Huttlin E.L."/>
            <person name="Jedrychowski M.P."/>
            <person name="Elias J.E."/>
            <person name="Goswami T."/>
            <person name="Rad R."/>
            <person name="Beausoleil S.A."/>
            <person name="Villen J."/>
            <person name="Haas W."/>
            <person name="Sowa M.E."/>
            <person name="Gygi S.P."/>
        </authorList>
    </citation>
    <scope>IDENTIFICATION BY MASS SPECTROMETRY [LARGE SCALE ANALYSIS]</scope>
    <source>
        <tissue>Kidney</tissue>
        <tissue>Lung</tissue>
        <tissue>Pancreas</tissue>
        <tissue>Spleen</tissue>
        <tissue>Testis</tissue>
    </source>
</reference>
<reference key="7">
    <citation type="journal article" date="2010" name="J. Mol. Biol.">
        <title>Structural basis for Par-4 recognition by the SPRY domain- and SOCS box-containing proteins SPSB1, SPSB2, and SPSB4.</title>
        <authorList>
            <person name="Filippakopoulos P."/>
            <person name="Low A."/>
            <person name="Sharpe T.D."/>
            <person name="Uppenberg J."/>
            <person name="Yao S."/>
            <person name="Kuang Z."/>
            <person name="Savitsky P."/>
            <person name="Lewis R.S."/>
            <person name="Nicholson S.E."/>
            <person name="Norton R.S."/>
            <person name="Bullock A.N."/>
        </authorList>
    </citation>
    <scope>INTERACTION WITH SPSB1; SPSB2 AND SPSB4</scope>
</reference>
<accession>Q925B0</accession>
<accession>Q0ZHI4</accession>
<accession>Q2HYJ1</accession>
<proteinExistence type="evidence at protein level"/>
<feature type="chain" id="PRO_0000058237" description="PRKC apoptosis WT1 regulator protein">
    <location>
        <begin position="1"/>
        <end position="333"/>
    </location>
</feature>
<feature type="region of interest" description="Disordered" evidence="5">
    <location>
        <begin position="1"/>
        <end position="262"/>
    </location>
</feature>
<feature type="region of interest" description="Selective for apoptosis induction in cancer cells (SAC)">
    <location>
        <begin position="138"/>
        <end position="196"/>
    </location>
</feature>
<feature type="region of interest" description="Leucine-zipper">
    <location>
        <begin position="293"/>
        <end position="333"/>
    </location>
</feature>
<feature type="coiled-coil region" evidence="4">
    <location>
        <begin position="255"/>
        <end position="333"/>
    </location>
</feature>
<feature type="short sequence motif" description="B30.2/SPRY domain-binding motif" evidence="3">
    <location>
        <begin position="62"/>
        <end position="66"/>
    </location>
</feature>
<feature type="short sequence motif" description="Nuclear localization signal" evidence="1">
    <location>
        <begin position="138"/>
        <end position="154"/>
    </location>
</feature>
<feature type="compositionally biased region" description="Low complexity" evidence="5">
    <location>
        <begin position="1"/>
        <end position="14"/>
    </location>
</feature>
<feature type="compositionally biased region" description="Low complexity" evidence="5">
    <location>
        <begin position="33"/>
        <end position="51"/>
    </location>
</feature>
<feature type="compositionally biased region" description="Low complexity" evidence="5">
    <location>
        <begin position="66"/>
        <end position="80"/>
    </location>
</feature>
<feature type="compositionally biased region" description="Low complexity" evidence="5">
    <location>
        <begin position="105"/>
        <end position="116"/>
    </location>
</feature>
<feature type="compositionally biased region" description="Basic and acidic residues" evidence="5">
    <location>
        <begin position="175"/>
        <end position="185"/>
    </location>
</feature>
<feature type="compositionally biased region" description="Polar residues" evidence="5">
    <location>
        <begin position="186"/>
        <end position="196"/>
    </location>
</feature>
<feature type="compositionally biased region" description="Basic and acidic residues" evidence="5">
    <location>
        <begin position="235"/>
        <end position="248"/>
    </location>
</feature>
<feature type="modified residue" description="Phosphothreonine; by PKA" evidence="2">
    <location>
        <position position="156"/>
    </location>
</feature>
<feature type="modified residue" description="Phosphoserine" evidence="3">
    <location>
        <position position="224"/>
    </location>
</feature>
<feature type="splice variant" id="VSP_022018" description="In isoform 2." evidence="7">
    <location>
        <begin position="166"/>
        <end position="209"/>
    </location>
</feature>
<keyword id="KW-0025">Alternative splicing</keyword>
<keyword id="KW-0053">Apoptosis</keyword>
<keyword id="KW-0175">Coiled coil</keyword>
<keyword id="KW-0963">Cytoplasm</keyword>
<keyword id="KW-0539">Nucleus</keyword>
<keyword id="KW-0597">Phosphoprotein</keyword>
<keyword id="KW-1185">Reference proteome</keyword>
<keyword id="KW-0804">Transcription</keyword>
<keyword id="KW-0805">Transcription regulation</keyword>
<gene>
    <name type="primary">Pawr</name>
    <name type="synonym">Par4</name>
</gene>
<organism>
    <name type="scientific">Mus musculus</name>
    <name type="common">Mouse</name>
    <dbReference type="NCBI Taxonomy" id="10090"/>
    <lineage>
        <taxon>Eukaryota</taxon>
        <taxon>Metazoa</taxon>
        <taxon>Chordata</taxon>
        <taxon>Craniata</taxon>
        <taxon>Vertebrata</taxon>
        <taxon>Euteleostomi</taxon>
        <taxon>Mammalia</taxon>
        <taxon>Eutheria</taxon>
        <taxon>Euarchontoglires</taxon>
        <taxon>Glires</taxon>
        <taxon>Rodentia</taxon>
        <taxon>Myomorpha</taxon>
        <taxon>Muroidea</taxon>
        <taxon>Muridae</taxon>
        <taxon>Murinae</taxon>
        <taxon>Mus</taxon>
        <taxon>Mus</taxon>
    </lineage>
</organism>
<protein>
    <recommendedName>
        <fullName>PRKC apoptosis WT1 regulator protein</fullName>
    </recommendedName>
    <alternativeName>
        <fullName>Prostate apoptosis response 4 protein</fullName>
        <shortName>Par-4</shortName>
    </alternativeName>
</protein>
<comment type="function">
    <text evidence="1 6">Pro-apoptotic protein capable of selectively inducing apoptosis in cancer cells, sensitizing the cells to diverse apoptotic stimuli and causing regression of tumors in animal models. Induces apoptosis in certain cancer cells by activation of the Fas prodeath pathway and coparallel inhibition of NF-kappa-B transcriptional activity. Inhibits the transcriptional activation and augments the transcriptional repression mediated by WT1. Down-regulates the anti-apoptotic protein BCL2 via its interaction with WT1. Also seems to be a transcriptional repressor by itself. May be directly involved in regulating the amyloid precursor protein (APP) cleavage activity of BACE1 (By similarity).</text>
</comment>
<comment type="subunit">
    <text evidence="2 3">Homooligomer. Interacts (via the C-terminal region) with WT1. Interacts with THAP1. Interacts with AATF. Interacts with BACE1. Interacts with SPSB1 (via B30.2/SPRY domain); this interaction is direct and occurs in association with the Elongin BC complex (PubMed:16369487, PubMed:20561531). Interacts with SPSB2 (via B30.2/SPRY domain); this interaction occurs in association with the Elongin BC complex (PubMed:16369487, PubMed:20561531). Interacts with SPSB4 (via B30.2/SPRY domain); this interaction occurs in association with the Elongin BC complex (PubMed:16369487, PubMed:20561531). Component of a ternary complex composed of SQSTM1 and PRKCZ (By similarity). Interacts with actin (By similarity).</text>
</comment>
<comment type="interaction">
    <interactant intactId="EBI-77397">
        <id>Q925B0</id>
    </interactant>
    <interactant intactId="EBI-77359">
        <id>O54784</id>
        <label>Dapk3</label>
    </interactant>
    <organismsDiffer>false</organismsDiffer>
    <experiments>2</experiments>
</comment>
<comment type="subcellular location">
    <subcellularLocation>
        <location evidence="1">Cytoplasm</location>
    </subcellularLocation>
    <subcellularLocation>
        <location evidence="1">Nucleus</location>
    </subcellularLocation>
    <text evidence="1">Mainly cytoplasmic in absence of apoptosis signal and in normal cells. Nuclear in most cancer cell lines. Nuclear entry seems to be essential but not sufficient for apoptosis. Nuclear localization includes nucleoplasm and PML nuclear bodies (By similarity).</text>
</comment>
<comment type="alternative products">
    <event type="alternative splicing"/>
    <isoform>
        <id>Q925B0-1</id>
        <name>1</name>
        <sequence type="displayed"/>
    </isoform>
    <isoform>
        <id>Q925B0-2</id>
        <name>2</name>
        <name>P33</name>
        <sequence type="described" ref="VSP_022018"/>
    </isoform>
</comment>
<comment type="domain">
    <text evidence="1">The leucine-zipper domain is not essential for apoptosis, but is required for sensitization of cells to exogenous apoptotic insults and for interaction with its partners.</text>
</comment>
<comment type="domain">
    <text evidence="1">The SAC domain is a death-inducing domain selective for apoptosis induction in cancer cells. This domain is essential for nuclear entry, Fas activation, inhibition of NF-kappa-B activity and induction of apoptosis in cancer cells (By similarity).</text>
</comment>
<comment type="domain">
    <text evidence="3">The B30.2/SPRY domain-binding motif mediates recognition by proteins containing a B30.2/SPRY domain.</text>
</comment>
<comment type="PTM">
    <text evidence="1">Preferentially phosphorylated at the Thr-156 by PKC in cancer cells.</text>
</comment>
<comment type="miscellaneous">
    <text>The synapses are crucial cellular sites for the cell death promoting actions of PAWR in motor neurons. Targeted inhibition of PAWR by RNAi is neuroprotective.</text>
</comment>
<name>PAWR_MOUSE</name>
<dbReference type="EMBL" id="DQ449073">
    <property type="protein sequence ID" value="ABE27591.1"/>
    <property type="molecule type" value="mRNA"/>
</dbReference>
<dbReference type="EMBL" id="DQ449074">
    <property type="protein sequence ID" value="ABE27592.1"/>
    <property type="molecule type" value="mRNA"/>
</dbReference>
<dbReference type="EMBL" id="DQ363525">
    <property type="protein sequence ID" value="ABC96645.1"/>
    <property type="molecule type" value="mRNA"/>
</dbReference>
<dbReference type="EMBL" id="AF377871">
    <property type="protein sequence ID" value="AAK55414.1"/>
    <property type="molecule type" value="mRNA"/>
</dbReference>
<dbReference type="CCDS" id="CCDS36053.1">
    <molecule id="Q925B0-1"/>
</dbReference>
<dbReference type="RefSeq" id="NP_473397.1">
    <molecule id="Q925B0-1"/>
    <property type="nucleotide sequence ID" value="NM_054056.2"/>
</dbReference>
<dbReference type="SMR" id="Q925B0"/>
<dbReference type="BioGRID" id="227870">
    <property type="interactions" value="6"/>
</dbReference>
<dbReference type="FunCoup" id="Q925B0">
    <property type="interactions" value="701"/>
</dbReference>
<dbReference type="IntAct" id="Q925B0">
    <property type="interactions" value="4"/>
</dbReference>
<dbReference type="MINT" id="Q925B0"/>
<dbReference type="STRING" id="10090.ENSMUSP00000092951"/>
<dbReference type="GlyGen" id="Q925B0">
    <property type="glycosylation" value="1 site, 1 O-linked glycan (1 site)"/>
</dbReference>
<dbReference type="iPTMnet" id="Q925B0"/>
<dbReference type="PhosphoSitePlus" id="Q925B0"/>
<dbReference type="SwissPalm" id="Q925B0"/>
<dbReference type="PaxDb" id="10090-ENSMUSP00000092951"/>
<dbReference type="PeptideAtlas" id="Q925B0"/>
<dbReference type="ProteomicsDB" id="294388">
    <molecule id="Q925B0-1"/>
</dbReference>
<dbReference type="ProteomicsDB" id="294389">
    <molecule id="Q925B0-2"/>
</dbReference>
<dbReference type="Pumba" id="Q925B0"/>
<dbReference type="Antibodypedia" id="1824">
    <property type="antibodies" value="388 antibodies from 40 providers"/>
</dbReference>
<dbReference type="DNASU" id="114774"/>
<dbReference type="Ensembl" id="ENSMUST00000095313.5">
    <molecule id="Q925B0-1"/>
    <property type="protein sequence ID" value="ENSMUSP00000092951.4"/>
    <property type="gene ID" value="ENSMUSG00000035873.9"/>
</dbReference>
<dbReference type="Ensembl" id="ENSMUST00000218332.2">
    <molecule id="Q925B0-2"/>
    <property type="protein sequence ID" value="ENSMUSP00000151457.2"/>
    <property type="gene ID" value="ENSMUSG00000035873.9"/>
</dbReference>
<dbReference type="GeneID" id="114774"/>
<dbReference type="KEGG" id="mmu:114774"/>
<dbReference type="UCSC" id="uc007gzf.1">
    <molecule id="Q925B0-1"/>
    <property type="organism name" value="mouse"/>
</dbReference>
<dbReference type="UCSC" id="uc011xnd.1">
    <molecule id="Q925B0-2"/>
    <property type="organism name" value="mouse"/>
</dbReference>
<dbReference type="AGR" id="MGI:2149961"/>
<dbReference type="CTD" id="5074"/>
<dbReference type="MGI" id="MGI:2149961">
    <property type="gene designation" value="Pawr"/>
</dbReference>
<dbReference type="VEuPathDB" id="HostDB:ENSMUSG00000035873"/>
<dbReference type="eggNOG" id="ENOG502QVUF">
    <property type="taxonomic scope" value="Eukaryota"/>
</dbReference>
<dbReference type="GeneTree" id="ENSGT00390000000406"/>
<dbReference type="HOGENOM" id="CLU_076619_0_0_1"/>
<dbReference type="InParanoid" id="Q925B0"/>
<dbReference type="OMA" id="SPMAGND"/>
<dbReference type="OrthoDB" id="6286739at2759"/>
<dbReference type="PhylomeDB" id="Q925B0"/>
<dbReference type="TreeFam" id="TF332824"/>
<dbReference type="BioGRID-ORCS" id="114774">
    <property type="hits" value="1 hit in 78 CRISPR screens"/>
</dbReference>
<dbReference type="ChiTaRS" id="Pawr">
    <property type="organism name" value="mouse"/>
</dbReference>
<dbReference type="PRO" id="PR:Q925B0"/>
<dbReference type="Proteomes" id="UP000000589">
    <property type="component" value="Chromosome 10"/>
</dbReference>
<dbReference type="RNAct" id="Q925B0">
    <property type="molecule type" value="protein"/>
</dbReference>
<dbReference type="Bgee" id="ENSMUSG00000035873">
    <property type="expression patterns" value="Expressed in ureter smooth muscle and 232 other cell types or tissues"/>
</dbReference>
<dbReference type="GO" id="GO:0015629">
    <property type="term" value="C:actin cytoskeleton"/>
    <property type="evidence" value="ECO:0007669"/>
    <property type="project" value="Ensembl"/>
</dbReference>
<dbReference type="GO" id="GO:0000785">
    <property type="term" value="C:chromatin"/>
    <property type="evidence" value="ECO:0000314"/>
    <property type="project" value="BHF-UCL"/>
</dbReference>
<dbReference type="GO" id="GO:0005737">
    <property type="term" value="C:cytoplasm"/>
    <property type="evidence" value="ECO:0000314"/>
    <property type="project" value="MGI"/>
</dbReference>
<dbReference type="GO" id="GO:0005829">
    <property type="term" value="C:cytosol"/>
    <property type="evidence" value="ECO:0007669"/>
    <property type="project" value="Ensembl"/>
</dbReference>
<dbReference type="GO" id="GO:0005634">
    <property type="term" value="C:nucleus"/>
    <property type="evidence" value="ECO:0000314"/>
    <property type="project" value="MGI"/>
</dbReference>
<dbReference type="GO" id="GO:0005886">
    <property type="term" value="C:plasma membrane"/>
    <property type="evidence" value="ECO:0007669"/>
    <property type="project" value="Ensembl"/>
</dbReference>
<dbReference type="GO" id="GO:0019899">
    <property type="term" value="F:enzyme binding"/>
    <property type="evidence" value="ECO:0007669"/>
    <property type="project" value="Ensembl"/>
</dbReference>
<dbReference type="GO" id="GO:0043522">
    <property type="term" value="F:leucine zipper domain binding"/>
    <property type="evidence" value="ECO:0007669"/>
    <property type="project" value="Ensembl"/>
</dbReference>
<dbReference type="GO" id="GO:0097190">
    <property type="term" value="P:apoptotic signaling pathway"/>
    <property type="evidence" value="ECO:0000316"/>
    <property type="project" value="MGI"/>
</dbReference>
<dbReference type="GO" id="GO:0030889">
    <property type="term" value="P:negative regulation of B cell proliferation"/>
    <property type="evidence" value="ECO:0000315"/>
    <property type="project" value="MGI"/>
</dbReference>
<dbReference type="GO" id="GO:0010719">
    <property type="term" value="P:negative regulation of epithelial to mesenchymal transition"/>
    <property type="evidence" value="ECO:0000303"/>
    <property type="project" value="BHF-UCL"/>
</dbReference>
<dbReference type="GO" id="GO:0048147">
    <property type="term" value="P:negative regulation of fibroblast proliferation"/>
    <property type="evidence" value="ECO:0000315"/>
    <property type="project" value="BHF-UCL"/>
</dbReference>
<dbReference type="GO" id="GO:0010629">
    <property type="term" value="P:negative regulation of gene expression"/>
    <property type="evidence" value="ECO:0000315"/>
    <property type="project" value="BHF-UCL"/>
</dbReference>
<dbReference type="GO" id="GO:0042130">
    <property type="term" value="P:negative regulation of T cell proliferation"/>
    <property type="evidence" value="ECO:0000315"/>
    <property type="project" value="MGI"/>
</dbReference>
<dbReference type="GO" id="GO:0050860">
    <property type="term" value="P:negative regulation of T cell receptor signaling pathway"/>
    <property type="evidence" value="ECO:0000315"/>
    <property type="project" value="MGI"/>
</dbReference>
<dbReference type="GO" id="GO:0000122">
    <property type="term" value="P:negative regulation of transcription by RNA polymerase II"/>
    <property type="evidence" value="ECO:0000315"/>
    <property type="project" value="BHF-UCL"/>
</dbReference>
<dbReference type="GO" id="GO:0042986">
    <property type="term" value="P:positive regulation of amyloid precursor protein biosynthetic process"/>
    <property type="evidence" value="ECO:0000314"/>
    <property type="project" value="MGI"/>
</dbReference>
<dbReference type="GO" id="GO:2000774">
    <property type="term" value="P:positive regulation of cellular senescence"/>
    <property type="evidence" value="ECO:0000315"/>
    <property type="project" value="BHF-UCL"/>
</dbReference>
<dbReference type="GO" id="GO:0010628">
    <property type="term" value="P:positive regulation of gene expression"/>
    <property type="evidence" value="ECO:0000315"/>
    <property type="project" value="BHF-UCL"/>
</dbReference>
<dbReference type="GO" id="GO:1901300">
    <property type="term" value="P:positive regulation of hydrogen peroxide-mediated programmed cell death"/>
    <property type="evidence" value="ECO:0000315"/>
    <property type="project" value="BHF-UCL"/>
</dbReference>
<dbReference type="InterPro" id="IPR026117">
    <property type="entry name" value="Par-4"/>
</dbReference>
<dbReference type="PANTHER" id="PTHR15093:SF1">
    <property type="entry name" value="PRKC APOPTOSIS WT1 REGULATOR PROTEIN"/>
    <property type="match status" value="1"/>
</dbReference>
<dbReference type="PANTHER" id="PTHR15093">
    <property type="entry name" value="PROSTATE APOPTOSIS RESPONSE PROTEIN PAR-4"/>
    <property type="match status" value="1"/>
</dbReference>
<evidence type="ECO:0000250" key="1"/>
<evidence type="ECO:0000250" key="2">
    <source>
        <dbReference type="UniProtKB" id="Q62627"/>
    </source>
</evidence>
<evidence type="ECO:0000250" key="3">
    <source>
        <dbReference type="UniProtKB" id="Q96IZ0"/>
    </source>
</evidence>
<evidence type="ECO:0000255" key="4"/>
<evidence type="ECO:0000256" key="5">
    <source>
        <dbReference type="SAM" id="MobiDB-lite"/>
    </source>
</evidence>
<evidence type="ECO:0000269" key="6">
    <source>
    </source>
</evidence>
<evidence type="ECO:0000303" key="7">
    <source>
    </source>
</evidence>